<proteinExistence type="evidence at transcript level"/>
<sequence length="190" mass="21222">MLSCLSKPALRCRSVNRLQFLRKLSLQEIQTLKTQHQYLGRTRLDVETPSLKPSAAGSGSTAPKPVTEREIASTRFMPRKNVIKLTPLAVEHLKKMQSSASMKGKMLRIGVKQKGCAGQAYSLEYIEKPDKFDEIVKQDGISIIVARRALLQIIGSVMDYRDDDLQSRFIFSNPNVKSTCGCGESFSTLK</sequence>
<organism>
    <name type="scientific">Schizosaccharomyces pombe (strain 972 / ATCC 24843)</name>
    <name type="common">Fission yeast</name>
    <dbReference type="NCBI Taxonomy" id="284812"/>
    <lineage>
        <taxon>Eukaryota</taxon>
        <taxon>Fungi</taxon>
        <taxon>Dikarya</taxon>
        <taxon>Ascomycota</taxon>
        <taxon>Taphrinomycotina</taxon>
        <taxon>Schizosaccharomycetes</taxon>
        <taxon>Schizosaccharomycetales</taxon>
        <taxon>Schizosaccharomycetaceae</taxon>
        <taxon>Schizosaccharomyces</taxon>
    </lineage>
</organism>
<keyword id="KW-0408">Iron</keyword>
<keyword id="KW-0479">Metal-binding</keyword>
<keyword id="KW-0496">Mitochondrion</keyword>
<keyword id="KW-1185">Reference proteome</keyword>
<gene>
    <name type="primary">isa1</name>
    <name type="ORF">SPCC645.03c</name>
</gene>
<name>ISA1_SCHPO</name>
<reference key="1">
    <citation type="journal article" date="1997" name="DNA Res.">
        <title>Identification of open reading frames in Schizosaccharomyces pombe cDNAs.</title>
        <authorList>
            <person name="Yoshioka S."/>
            <person name="Kato K."/>
            <person name="Nakai K."/>
            <person name="Okayama H."/>
            <person name="Nojima H."/>
        </authorList>
    </citation>
    <scope>NUCLEOTIDE SEQUENCE [LARGE SCALE MRNA]</scope>
    <source>
        <strain>PR745</strain>
    </source>
</reference>
<reference key="2">
    <citation type="journal article" date="2002" name="Nature">
        <title>The genome sequence of Schizosaccharomyces pombe.</title>
        <authorList>
            <person name="Wood V."/>
            <person name="Gwilliam R."/>
            <person name="Rajandream M.A."/>
            <person name="Lyne M.H."/>
            <person name="Lyne R."/>
            <person name="Stewart A."/>
            <person name="Sgouros J.G."/>
            <person name="Peat N."/>
            <person name="Hayles J."/>
            <person name="Baker S.G."/>
            <person name="Basham D."/>
            <person name="Bowman S."/>
            <person name="Brooks K."/>
            <person name="Brown D."/>
            <person name="Brown S."/>
            <person name="Chillingworth T."/>
            <person name="Churcher C.M."/>
            <person name="Collins M."/>
            <person name="Connor R."/>
            <person name="Cronin A."/>
            <person name="Davis P."/>
            <person name="Feltwell T."/>
            <person name="Fraser A."/>
            <person name="Gentles S."/>
            <person name="Goble A."/>
            <person name="Hamlin N."/>
            <person name="Harris D.E."/>
            <person name="Hidalgo J."/>
            <person name="Hodgson G."/>
            <person name="Holroyd S."/>
            <person name="Hornsby T."/>
            <person name="Howarth S."/>
            <person name="Huckle E.J."/>
            <person name="Hunt S."/>
            <person name="Jagels K."/>
            <person name="James K.D."/>
            <person name="Jones L."/>
            <person name="Jones M."/>
            <person name="Leather S."/>
            <person name="McDonald S."/>
            <person name="McLean J."/>
            <person name="Mooney P."/>
            <person name="Moule S."/>
            <person name="Mungall K.L."/>
            <person name="Murphy L.D."/>
            <person name="Niblett D."/>
            <person name="Odell C."/>
            <person name="Oliver K."/>
            <person name="O'Neil S."/>
            <person name="Pearson D."/>
            <person name="Quail M.A."/>
            <person name="Rabbinowitsch E."/>
            <person name="Rutherford K.M."/>
            <person name="Rutter S."/>
            <person name="Saunders D."/>
            <person name="Seeger K."/>
            <person name="Sharp S."/>
            <person name="Skelton J."/>
            <person name="Simmonds M.N."/>
            <person name="Squares R."/>
            <person name="Squares S."/>
            <person name="Stevens K."/>
            <person name="Taylor K."/>
            <person name="Taylor R.G."/>
            <person name="Tivey A."/>
            <person name="Walsh S.V."/>
            <person name="Warren T."/>
            <person name="Whitehead S."/>
            <person name="Woodward J.R."/>
            <person name="Volckaert G."/>
            <person name="Aert R."/>
            <person name="Robben J."/>
            <person name="Grymonprez B."/>
            <person name="Weltjens I."/>
            <person name="Vanstreels E."/>
            <person name="Rieger M."/>
            <person name="Schaefer M."/>
            <person name="Mueller-Auer S."/>
            <person name="Gabel C."/>
            <person name="Fuchs M."/>
            <person name="Duesterhoeft A."/>
            <person name="Fritzc C."/>
            <person name="Holzer E."/>
            <person name="Moestl D."/>
            <person name="Hilbert H."/>
            <person name="Borzym K."/>
            <person name="Langer I."/>
            <person name="Beck A."/>
            <person name="Lehrach H."/>
            <person name="Reinhardt R."/>
            <person name="Pohl T.M."/>
            <person name="Eger P."/>
            <person name="Zimmermann W."/>
            <person name="Wedler H."/>
            <person name="Wambutt R."/>
            <person name="Purnelle B."/>
            <person name="Goffeau A."/>
            <person name="Cadieu E."/>
            <person name="Dreano S."/>
            <person name="Gloux S."/>
            <person name="Lelaure V."/>
            <person name="Mottier S."/>
            <person name="Galibert F."/>
            <person name="Aves S.J."/>
            <person name="Xiang Z."/>
            <person name="Hunt C."/>
            <person name="Moore K."/>
            <person name="Hurst S.M."/>
            <person name="Lucas M."/>
            <person name="Rochet M."/>
            <person name="Gaillardin C."/>
            <person name="Tallada V.A."/>
            <person name="Garzon A."/>
            <person name="Thode G."/>
            <person name="Daga R.R."/>
            <person name="Cruzado L."/>
            <person name="Jimenez J."/>
            <person name="Sanchez M."/>
            <person name="del Rey F."/>
            <person name="Benito J."/>
            <person name="Dominguez A."/>
            <person name="Revuelta J.L."/>
            <person name="Moreno S."/>
            <person name="Armstrong J."/>
            <person name="Forsburg S.L."/>
            <person name="Cerutti L."/>
            <person name="Lowe T."/>
            <person name="McCombie W.R."/>
            <person name="Paulsen I."/>
            <person name="Potashkin J."/>
            <person name="Shpakovski G.V."/>
            <person name="Ussery D."/>
            <person name="Barrell B.G."/>
            <person name="Nurse P."/>
        </authorList>
    </citation>
    <scope>NUCLEOTIDE SEQUENCE [LARGE SCALE GENOMIC DNA]</scope>
    <source>
        <strain>972 / ATCC 24843</strain>
    </source>
</reference>
<reference key="3">
    <citation type="journal article" date="2002" name="J. Biol. Inorg. Chem.">
        <title>Iron-sulfur cluster biosynthesis: characterization of Schizosaccharomyces pombe Isa1.</title>
        <authorList>
            <person name="Wu G."/>
            <person name="Mansy S.S."/>
            <person name="Hemann C."/>
            <person name="Hille R."/>
            <person name="Surerus K.K."/>
            <person name="Cowan J.A."/>
        </authorList>
    </citation>
    <scope>FUNCTION</scope>
</reference>
<dbReference type="EMBL" id="D89209">
    <property type="protein sequence ID" value="BAA13870.1"/>
    <property type="molecule type" value="mRNA"/>
</dbReference>
<dbReference type="EMBL" id="CU329672">
    <property type="protein sequence ID" value="CAB39899.1"/>
    <property type="molecule type" value="Genomic_DNA"/>
</dbReference>
<dbReference type="PIR" id="T43013">
    <property type="entry name" value="T43013"/>
</dbReference>
<dbReference type="RefSeq" id="NP_588112.1">
    <property type="nucleotide sequence ID" value="NM_001023102.2"/>
</dbReference>
<dbReference type="SMR" id="P78859"/>
<dbReference type="BioGRID" id="275974">
    <property type="interactions" value="4"/>
</dbReference>
<dbReference type="FunCoup" id="P78859">
    <property type="interactions" value="411"/>
</dbReference>
<dbReference type="STRING" id="284812.P78859"/>
<dbReference type="PaxDb" id="4896-SPCC645.03c.1"/>
<dbReference type="EnsemblFungi" id="SPCC645.03c.1">
    <property type="protein sequence ID" value="SPCC645.03c.1:pep"/>
    <property type="gene ID" value="SPCC645.03c"/>
</dbReference>
<dbReference type="GeneID" id="2539409"/>
<dbReference type="KEGG" id="spo:2539409"/>
<dbReference type="PomBase" id="SPCC645.03c">
    <property type="gene designation" value="isa1"/>
</dbReference>
<dbReference type="VEuPathDB" id="FungiDB:SPCC645.03c"/>
<dbReference type="eggNOG" id="KOG1120">
    <property type="taxonomic scope" value="Eukaryota"/>
</dbReference>
<dbReference type="HOGENOM" id="CLU_069054_0_2_1"/>
<dbReference type="InParanoid" id="P78859"/>
<dbReference type="OMA" id="CAGQAYS"/>
<dbReference type="PhylomeDB" id="P78859"/>
<dbReference type="Reactome" id="R-SPO-1362409">
    <property type="pathway name" value="Mitochondrial iron-sulfur cluster biogenesis"/>
</dbReference>
<dbReference type="PRO" id="PR:P78859"/>
<dbReference type="Proteomes" id="UP000002485">
    <property type="component" value="Chromosome III"/>
</dbReference>
<dbReference type="GO" id="GO:0005737">
    <property type="term" value="C:cytoplasm"/>
    <property type="evidence" value="ECO:0000318"/>
    <property type="project" value="GO_Central"/>
</dbReference>
<dbReference type="GO" id="GO:0120510">
    <property type="term" value="C:mitochondrial [4Fe-4S] assembly complex"/>
    <property type="evidence" value="ECO:0000304"/>
    <property type="project" value="PomBase"/>
</dbReference>
<dbReference type="GO" id="GO:0005759">
    <property type="term" value="C:mitochondrial matrix"/>
    <property type="evidence" value="ECO:0007669"/>
    <property type="project" value="UniProtKB-SubCell"/>
</dbReference>
<dbReference type="GO" id="GO:0005739">
    <property type="term" value="C:mitochondrion"/>
    <property type="evidence" value="ECO:0000314"/>
    <property type="project" value="PomBase"/>
</dbReference>
<dbReference type="GO" id="GO:0051537">
    <property type="term" value="F:2 iron, 2 sulfur cluster binding"/>
    <property type="evidence" value="ECO:0000314"/>
    <property type="project" value="PomBase"/>
</dbReference>
<dbReference type="GO" id="GO:0051536">
    <property type="term" value="F:iron-sulfur cluster binding"/>
    <property type="evidence" value="ECO:0000314"/>
    <property type="project" value="PomBase"/>
</dbReference>
<dbReference type="GO" id="GO:0036455">
    <property type="term" value="F:iron-sulfur transferase activity"/>
    <property type="evidence" value="ECO:0000314"/>
    <property type="project" value="PomBase"/>
</dbReference>
<dbReference type="GO" id="GO:0046872">
    <property type="term" value="F:metal ion binding"/>
    <property type="evidence" value="ECO:0007669"/>
    <property type="project" value="UniProtKB-KW"/>
</dbReference>
<dbReference type="GO" id="GO:0044572">
    <property type="term" value="P:[4Fe-4S] cluster assembly"/>
    <property type="evidence" value="ECO:0000250"/>
    <property type="project" value="PomBase"/>
</dbReference>
<dbReference type="GO" id="GO:0016226">
    <property type="term" value="P:iron-sulfur cluster assembly"/>
    <property type="evidence" value="ECO:0000314"/>
    <property type="project" value="PomBase"/>
</dbReference>
<dbReference type="FunFam" id="2.60.300.12:FF:000001">
    <property type="entry name" value="Iron-binding protein IscA"/>
    <property type="match status" value="1"/>
</dbReference>
<dbReference type="Gene3D" id="2.60.300.12">
    <property type="entry name" value="HesB-like domain"/>
    <property type="match status" value="1"/>
</dbReference>
<dbReference type="InterPro" id="IPR050322">
    <property type="entry name" value="Fe-S_cluster_asmbl/transfer"/>
</dbReference>
<dbReference type="InterPro" id="IPR000361">
    <property type="entry name" value="FeS_biogenesis"/>
</dbReference>
<dbReference type="InterPro" id="IPR016092">
    <property type="entry name" value="FeS_cluster_insertion"/>
</dbReference>
<dbReference type="InterPro" id="IPR017870">
    <property type="entry name" value="FeS_cluster_insertion_CS"/>
</dbReference>
<dbReference type="InterPro" id="IPR035903">
    <property type="entry name" value="HesB-like_dom_sf"/>
</dbReference>
<dbReference type="NCBIfam" id="TIGR00049">
    <property type="entry name" value="iron-sulfur cluster assembly accessory protein"/>
    <property type="match status" value="1"/>
</dbReference>
<dbReference type="PANTHER" id="PTHR10072:SF41">
    <property type="entry name" value="IRON-SULFUR CLUSTER ASSEMBLY 1 HOMOLOG, MITOCHONDRIAL"/>
    <property type="match status" value="1"/>
</dbReference>
<dbReference type="PANTHER" id="PTHR10072">
    <property type="entry name" value="IRON-SULFUR CLUSTER ASSEMBLY PROTEIN"/>
    <property type="match status" value="1"/>
</dbReference>
<dbReference type="Pfam" id="PF01521">
    <property type="entry name" value="Fe-S_biosyn"/>
    <property type="match status" value="1"/>
</dbReference>
<dbReference type="SUPFAM" id="SSF89360">
    <property type="entry name" value="HesB-like domain"/>
    <property type="match status" value="1"/>
</dbReference>
<dbReference type="PROSITE" id="PS01152">
    <property type="entry name" value="HESB"/>
    <property type="match status" value="1"/>
</dbReference>
<accession>P78859</accession>
<feature type="chain" id="PRO_0000077036" description="Iron-sulfur assembly protein 1">
    <location>
        <begin position="1"/>
        <end position="190"/>
    </location>
</feature>
<feature type="region of interest" description="Disordered" evidence="2">
    <location>
        <begin position="49"/>
        <end position="71"/>
    </location>
</feature>
<feature type="binding site" evidence="1">
    <location>
        <position position="116"/>
    </location>
    <ligand>
        <name>Fe cation</name>
        <dbReference type="ChEBI" id="CHEBI:24875"/>
    </ligand>
</feature>
<feature type="binding site" evidence="1">
    <location>
        <position position="180"/>
    </location>
    <ligand>
        <name>Fe cation</name>
        <dbReference type="ChEBI" id="CHEBI:24875"/>
    </ligand>
</feature>
<feature type="binding site" evidence="1">
    <location>
        <position position="182"/>
    </location>
    <ligand>
        <name>Fe cation</name>
        <dbReference type="ChEBI" id="CHEBI:24875"/>
    </ligand>
</feature>
<protein>
    <recommendedName>
        <fullName>Iron-sulfur assembly protein 1</fullName>
    </recommendedName>
</protein>
<evidence type="ECO:0000250" key="1">
    <source>
        <dbReference type="UniProtKB" id="P0AAC8"/>
    </source>
</evidence>
<evidence type="ECO:0000256" key="2">
    <source>
        <dbReference type="SAM" id="MobiDB-lite"/>
    </source>
</evidence>
<evidence type="ECO:0000269" key="3">
    <source>
    </source>
</evidence>
<evidence type="ECO:0000305" key="4"/>
<comment type="function">
    <text evidence="3">Involved in the assembly of mitochondrial and cytoplasmic iron-sulfur proteins. Probably involved in the binding of an intermediate of Fe/S cluster assembly.</text>
</comment>
<comment type="subcellular location">
    <subcellularLocation>
        <location>Mitochondrion matrix</location>
    </subcellularLocation>
</comment>
<comment type="similarity">
    <text evidence="4">Belongs to the HesB/IscA family.</text>
</comment>